<name>UNG_MIMIV</name>
<feature type="chain" id="PRO_0000176176" description="Probable uracil-DNA glycosylase">
    <location>
        <begin position="1"/>
        <end position="370"/>
    </location>
</feature>
<feature type="region of interest" description="Disordered" evidence="3">
    <location>
        <begin position="1"/>
        <end position="83"/>
    </location>
</feature>
<feature type="compositionally biased region" description="Low complexity" evidence="3">
    <location>
        <begin position="7"/>
        <end position="24"/>
    </location>
</feature>
<feature type="compositionally biased region" description="Basic and acidic residues" evidence="3">
    <location>
        <begin position="41"/>
        <end position="53"/>
    </location>
</feature>
<feature type="compositionally biased region" description="Acidic residues" evidence="3">
    <location>
        <begin position="54"/>
        <end position="64"/>
    </location>
</feature>
<feature type="compositionally biased region" description="Basic residues" evidence="3">
    <location>
        <begin position="69"/>
        <end position="83"/>
    </location>
</feature>
<feature type="active site" description="Proton acceptor" evidence="2">
    <location>
        <position position="191"/>
    </location>
</feature>
<feature type="helix" evidence="5">
    <location>
        <begin position="98"/>
        <end position="102"/>
    </location>
</feature>
<feature type="helix" evidence="5">
    <location>
        <begin position="106"/>
        <end position="108"/>
    </location>
</feature>
<feature type="helix" evidence="5">
    <location>
        <begin position="114"/>
        <end position="117"/>
    </location>
</feature>
<feature type="strand" evidence="6">
    <location>
        <begin position="119"/>
        <end position="121"/>
    </location>
</feature>
<feature type="helix" evidence="5">
    <location>
        <begin position="125"/>
        <end position="128"/>
    </location>
</feature>
<feature type="helix" evidence="5">
    <location>
        <begin position="132"/>
        <end position="134"/>
    </location>
</feature>
<feature type="helix" evidence="5">
    <location>
        <begin position="135"/>
        <end position="142"/>
    </location>
</feature>
<feature type="helix" evidence="5">
    <location>
        <begin position="146"/>
        <end position="159"/>
    </location>
</feature>
<feature type="strand" evidence="5">
    <location>
        <begin position="164"/>
        <end position="166"/>
    </location>
</feature>
<feature type="helix" evidence="5">
    <location>
        <begin position="168"/>
        <end position="170"/>
    </location>
</feature>
<feature type="helix" evidence="5">
    <location>
        <begin position="173"/>
        <end position="177"/>
    </location>
</feature>
<feature type="helix" evidence="5">
    <location>
        <begin position="180"/>
        <end position="182"/>
    </location>
</feature>
<feature type="strand" evidence="5">
    <location>
        <begin position="185"/>
        <end position="191"/>
    </location>
</feature>
<feature type="strand" evidence="5">
    <location>
        <begin position="206"/>
        <end position="209"/>
    </location>
</feature>
<feature type="helix" evidence="5">
    <location>
        <begin position="219"/>
        <end position="230"/>
    </location>
</feature>
<feature type="helix" evidence="5">
    <location>
        <begin position="244"/>
        <end position="248"/>
    </location>
</feature>
<feature type="strand" evidence="5">
    <location>
        <begin position="251"/>
        <end position="257"/>
    </location>
</feature>
<feature type="strand" evidence="5">
    <location>
        <begin position="264"/>
        <end position="266"/>
    </location>
</feature>
<feature type="turn" evidence="5">
    <location>
        <begin position="267"/>
        <end position="272"/>
    </location>
</feature>
<feature type="helix" evidence="5">
    <location>
        <begin position="273"/>
        <end position="286"/>
    </location>
</feature>
<feature type="strand" evidence="5">
    <location>
        <begin position="291"/>
        <end position="296"/>
    </location>
</feature>
<feature type="helix" evidence="5">
    <location>
        <begin position="297"/>
        <end position="303"/>
    </location>
</feature>
<feature type="turn" evidence="5">
    <location>
        <begin position="308"/>
        <end position="310"/>
    </location>
</feature>
<feature type="strand" evidence="5">
    <location>
        <begin position="311"/>
        <end position="316"/>
    </location>
</feature>
<feature type="turn" evidence="5">
    <location>
        <begin position="321"/>
        <end position="325"/>
    </location>
</feature>
<feature type="strand" evidence="5">
    <location>
        <begin position="328"/>
        <end position="332"/>
    </location>
</feature>
<feature type="strand" evidence="5">
    <location>
        <begin position="334"/>
        <end position="336"/>
    </location>
</feature>
<feature type="strand" evidence="5">
    <location>
        <begin position="338"/>
        <end position="342"/>
    </location>
</feature>
<feature type="helix" evidence="5">
    <location>
        <begin position="345"/>
        <end position="347"/>
    </location>
</feature>
<feature type="helix" evidence="5">
    <location>
        <begin position="350"/>
        <end position="360"/>
    </location>
</feature>
<evidence type="ECO:0000250" key="1"/>
<evidence type="ECO:0000255" key="2">
    <source>
        <dbReference type="PROSITE-ProRule" id="PRU10072"/>
    </source>
</evidence>
<evidence type="ECO:0000256" key="3">
    <source>
        <dbReference type="SAM" id="MobiDB-lite"/>
    </source>
</evidence>
<evidence type="ECO:0000305" key="4"/>
<evidence type="ECO:0007829" key="5">
    <source>
        <dbReference type="PDB" id="5X55"/>
    </source>
</evidence>
<evidence type="ECO:0007829" key="6">
    <source>
        <dbReference type="PDB" id="6LYD"/>
    </source>
</evidence>
<proteinExistence type="evidence at protein level"/>
<organismHost>
    <name type="scientific">Acanthamoeba polyphaga</name>
    <name type="common">Amoeba</name>
    <dbReference type="NCBI Taxonomy" id="5757"/>
</organismHost>
<keyword id="KW-0002">3D-structure</keyword>
<keyword id="KW-0227">DNA damage</keyword>
<keyword id="KW-0234">DNA repair</keyword>
<keyword id="KW-0378">Hydrolase</keyword>
<keyword id="KW-1185">Reference proteome</keyword>
<sequence length="370" mass="42218">MSKKNVDPFSDSDSSSEPPSIFSSDNEENSDVDNSVIINDKNTKSDEADIKYMDEDESSDSESESESKKKSKKSKKSKKSKKSVTKKKNNLLVGNRIITEYILIDANNYHFKSWIECFPDCKVNLKLLLFRPEWFDFFKYVESKTYFPQLESKLSSYLEKRQRIVPYPELLFNTMNVLPPGKIKVVILGQDPYPGSCISGVPYAMGCSFSVPLNCPVPKSLANIYTNLIKFNHMRKAPKHGCLASWILQGTFMINSAFTTVLNESGVHARTWESFTADLIDYLTDNYDDLIFVAWGAHAHKLCQRVDPKKHYIITSSHPSPYSVSNTMTSMSYGPNPKKVTYPSFNSVDHFGKINEHLKSRNKKPIFWDL</sequence>
<dbReference type="EC" id="3.2.2.-"/>
<dbReference type="EMBL" id="AY653733">
    <property type="protein sequence ID" value="AAV50521.1"/>
    <property type="molecule type" value="Genomic_DNA"/>
</dbReference>
<dbReference type="PDB" id="5X55">
    <property type="method" value="X-ray"/>
    <property type="resolution" value="2.30 A"/>
    <property type="chains" value="A/B=1-370"/>
</dbReference>
<dbReference type="PDB" id="6LYD">
    <property type="method" value="X-ray"/>
    <property type="resolution" value="2.60 A"/>
    <property type="chains" value="A=95-370"/>
</dbReference>
<dbReference type="PDB" id="6LYE">
    <property type="method" value="X-ray"/>
    <property type="resolution" value="3.10 A"/>
    <property type="chains" value="A=95-370"/>
</dbReference>
<dbReference type="PDBsum" id="5X55"/>
<dbReference type="PDBsum" id="6LYD"/>
<dbReference type="PDBsum" id="6LYE"/>
<dbReference type="SMR" id="Q5UPT2"/>
<dbReference type="KEGG" id="vg:9924856"/>
<dbReference type="OrthoDB" id="11388at10239"/>
<dbReference type="Proteomes" id="UP000001134">
    <property type="component" value="Genome"/>
</dbReference>
<dbReference type="GO" id="GO:0004844">
    <property type="term" value="F:uracil DNA N-glycosylase activity"/>
    <property type="evidence" value="ECO:0000314"/>
    <property type="project" value="DisProt"/>
</dbReference>
<dbReference type="GO" id="GO:0097510">
    <property type="term" value="P:base-excision repair, AP site formation via deaminated base removal"/>
    <property type="evidence" value="ECO:0007669"/>
    <property type="project" value="TreeGrafter"/>
</dbReference>
<dbReference type="CDD" id="cd10027">
    <property type="entry name" value="UDG-F1-like"/>
    <property type="match status" value="1"/>
</dbReference>
<dbReference type="DisProt" id="DP01481"/>
<dbReference type="Gene3D" id="3.40.470.10">
    <property type="entry name" value="Uracil-DNA glycosylase-like domain"/>
    <property type="match status" value="1"/>
</dbReference>
<dbReference type="InterPro" id="IPR002043">
    <property type="entry name" value="UDG_fam1"/>
</dbReference>
<dbReference type="InterPro" id="IPR018085">
    <property type="entry name" value="Ura-DNA_Glyclase_AS"/>
</dbReference>
<dbReference type="InterPro" id="IPR005122">
    <property type="entry name" value="Uracil-DNA_glycosylase-like"/>
</dbReference>
<dbReference type="InterPro" id="IPR036895">
    <property type="entry name" value="Uracil-DNA_glycosylase-like_sf"/>
</dbReference>
<dbReference type="NCBIfam" id="NF003592">
    <property type="entry name" value="PRK05254.1-5"/>
    <property type="match status" value="1"/>
</dbReference>
<dbReference type="PANTHER" id="PTHR11264">
    <property type="entry name" value="URACIL-DNA GLYCOSYLASE"/>
    <property type="match status" value="1"/>
</dbReference>
<dbReference type="PANTHER" id="PTHR11264:SF0">
    <property type="entry name" value="URACIL-DNA GLYCOSYLASE"/>
    <property type="match status" value="1"/>
</dbReference>
<dbReference type="Pfam" id="PF03167">
    <property type="entry name" value="UDG"/>
    <property type="match status" value="1"/>
</dbReference>
<dbReference type="SUPFAM" id="SSF52141">
    <property type="entry name" value="Uracil-DNA glycosylase-like"/>
    <property type="match status" value="1"/>
</dbReference>
<dbReference type="PROSITE" id="PS00130">
    <property type="entry name" value="U_DNA_GLYCOSYLASE"/>
    <property type="match status" value="1"/>
</dbReference>
<gene>
    <name type="primary">UNG</name>
    <name type="ordered locus">MIMI_L249</name>
</gene>
<reference key="1">
    <citation type="journal article" date="2004" name="Science">
        <title>The 1.2-megabase genome sequence of Mimivirus.</title>
        <authorList>
            <person name="Raoult D."/>
            <person name="Audic S."/>
            <person name="Robert C."/>
            <person name="Abergel C."/>
            <person name="Renesto P."/>
            <person name="Ogata H."/>
            <person name="La Scola B."/>
            <person name="Susan M."/>
            <person name="Claverie J.-M."/>
        </authorList>
    </citation>
    <scope>NUCLEOTIDE SEQUENCE [LARGE SCALE GENOMIC DNA]</scope>
    <source>
        <strain>Rowbotham-Bradford</strain>
    </source>
</reference>
<protein>
    <recommendedName>
        <fullName>Probable uracil-DNA glycosylase</fullName>
        <shortName>UDG</shortName>
        <ecNumber>3.2.2.-</ecNumber>
    </recommendedName>
</protein>
<organism>
    <name type="scientific">Acanthamoeba polyphaga mimivirus</name>
    <name type="common">APMV</name>
    <dbReference type="NCBI Taxonomy" id="212035"/>
    <lineage>
        <taxon>Viruses</taxon>
        <taxon>Varidnaviria</taxon>
        <taxon>Bamfordvirae</taxon>
        <taxon>Nucleocytoviricota</taxon>
        <taxon>Megaviricetes</taxon>
        <taxon>Imitervirales</taxon>
        <taxon>Mimiviridae</taxon>
        <taxon>Megamimivirinae</taxon>
        <taxon>Mimivirus</taxon>
        <taxon>Mimivirus bradfordmassiliense</taxon>
    </lineage>
</organism>
<accession>Q5UPT2</accession>
<comment type="function">
    <text evidence="1">Excises uracil residues from the DNA which can arise as a result of misincorporation of dUMP residues by DNA polymerase or due to deamination of cytosine.</text>
</comment>
<comment type="similarity">
    <text evidence="4">Belongs to the uracil-DNA glycosylase (UDG) superfamily. UNG family.</text>
</comment>